<organism>
    <name type="scientific">Methanoregula boonei (strain DSM 21154 / JCM 14090 / 6A8)</name>
    <dbReference type="NCBI Taxonomy" id="456442"/>
    <lineage>
        <taxon>Archaea</taxon>
        <taxon>Methanobacteriati</taxon>
        <taxon>Methanobacteriota</taxon>
        <taxon>Stenosarchaea group</taxon>
        <taxon>Methanomicrobia</taxon>
        <taxon>Methanomicrobiales</taxon>
        <taxon>Methanoregulaceae</taxon>
        <taxon>Methanoregula</taxon>
    </lineage>
</organism>
<proteinExistence type="inferred from homology"/>
<reference key="1">
    <citation type="journal article" date="2015" name="Microbiology">
        <title>Genome of Methanoregula boonei 6A8 reveals adaptations to oligotrophic peatland environments.</title>
        <authorList>
            <person name="Braeuer S."/>
            <person name="Cadillo-Quiroz H."/>
            <person name="Kyrpides N."/>
            <person name="Woyke T."/>
            <person name="Goodwin L."/>
            <person name="Detter C."/>
            <person name="Podell S."/>
            <person name="Yavitt J.B."/>
            <person name="Zinder S.H."/>
        </authorList>
    </citation>
    <scope>NUCLEOTIDE SEQUENCE [LARGE SCALE GENOMIC DNA]</scope>
    <source>
        <strain>DSM 21154 / JCM 14090 / 6A8</strain>
    </source>
</reference>
<gene>
    <name evidence="1" type="primary">groEL</name>
    <name evidence="1" type="synonym">groL</name>
    <name type="ordered locus">Mboo_1091</name>
</gene>
<name>CH60_METB6</name>
<protein>
    <recommendedName>
        <fullName evidence="1">Chaperonin GroEL</fullName>
        <ecNumber evidence="1">5.6.1.7</ecNumber>
    </recommendedName>
    <alternativeName>
        <fullName evidence="1">60 kDa chaperonin</fullName>
    </alternativeName>
    <alternativeName>
        <fullName evidence="1">Chaperonin-60</fullName>
        <shortName evidence="1">Cpn60</shortName>
    </alternativeName>
</protein>
<sequence>MAGSKQLVFNEEARKSLLAGVNKVADTVKITLGPKGRYVVIDKATSPIVTNDGVTIAKEIALHDKFENMGAKLVKEVAQKTQDKTGDGTTTATLLAQSMIVEGLKNITSGSNPIEVKKGIDAAVNASVGYIKTTSVPVKDRAKIVQVATISANNDEEIGTLISEAMEKVGYNGLISVEDAKSLETSLDVVKGMQFDRGFISPYMVTDNEKMVCEYEDCSILITDKKISSVKQMIPVLEMVASEGKPLLIIADDVEGEAQAALFLNIIRGALKVCAVKAPGYGDDRKAILEDIAILTGATVISEEKGMKIDGVTKRELGQAHVIRVDSEKTLIVGGRGEKKAVEDRMTLIQSQINIADSEYKKEELKKRLGNLGGGVAVIKVGAVTETELKEKKMRMDDALNATKAAVEEGVVVGGGITLFRAIESLDTLKFEDDRRVGVSIVKRALEEPIRQIAKNSGIEGAEVIAKIREHKNKHYGYNAKTGIYEDLMENGVIDPAKVVRIGLQNAGSIAGLILSTEVLITDFNDEKDQKSAAIII</sequence>
<feature type="chain" id="PRO_0000332102" description="Chaperonin GroEL">
    <location>
        <begin position="1"/>
        <end position="537"/>
    </location>
</feature>
<feature type="binding site" evidence="1">
    <location>
        <begin position="31"/>
        <end position="34"/>
    </location>
    <ligand>
        <name>ATP</name>
        <dbReference type="ChEBI" id="CHEBI:30616"/>
    </ligand>
</feature>
<feature type="binding site" evidence="1">
    <location>
        <begin position="87"/>
        <end position="91"/>
    </location>
    <ligand>
        <name>ATP</name>
        <dbReference type="ChEBI" id="CHEBI:30616"/>
    </ligand>
</feature>
<feature type="binding site" evidence="1">
    <location>
        <position position="415"/>
    </location>
    <ligand>
        <name>ATP</name>
        <dbReference type="ChEBI" id="CHEBI:30616"/>
    </ligand>
</feature>
<feature type="binding site" evidence="1">
    <location>
        <position position="495"/>
    </location>
    <ligand>
        <name>ATP</name>
        <dbReference type="ChEBI" id="CHEBI:30616"/>
    </ligand>
</feature>
<accession>A7I798</accession>
<dbReference type="EC" id="5.6.1.7" evidence="1"/>
<dbReference type="EMBL" id="CP000780">
    <property type="protein sequence ID" value="ABS55609.1"/>
    <property type="molecule type" value="Genomic_DNA"/>
</dbReference>
<dbReference type="RefSeq" id="WP_012106636.1">
    <property type="nucleotide sequence ID" value="NC_009712.1"/>
</dbReference>
<dbReference type="SMR" id="A7I798"/>
<dbReference type="STRING" id="456442.Mboo_1091"/>
<dbReference type="GeneID" id="5410016"/>
<dbReference type="KEGG" id="mbn:Mboo_1091"/>
<dbReference type="eggNOG" id="arCOG05154">
    <property type="taxonomic scope" value="Archaea"/>
</dbReference>
<dbReference type="HOGENOM" id="CLU_016503_3_0_2"/>
<dbReference type="OrthoDB" id="106945at2157"/>
<dbReference type="Proteomes" id="UP000002408">
    <property type="component" value="Chromosome"/>
</dbReference>
<dbReference type="GO" id="GO:0005737">
    <property type="term" value="C:cytoplasm"/>
    <property type="evidence" value="ECO:0007669"/>
    <property type="project" value="UniProtKB-SubCell"/>
</dbReference>
<dbReference type="GO" id="GO:0005524">
    <property type="term" value="F:ATP binding"/>
    <property type="evidence" value="ECO:0007669"/>
    <property type="project" value="UniProtKB-UniRule"/>
</dbReference>
<dbReference type="GO" id="GO:0140662">
    <property type="term" value="F:ATP-dependent protein folding chaperone"/>
    <property type="evidence" value="ECO:0007669"/>
    <property type="project" value="InterPro"/>
</dbReference>
<dbReference type="GO" id="GO:0016853">
    <property type="term" value="F:isomerase activity"/>
    <property type="evidence" value="ECO:0007669"/>
    <property type="project" value="UniProtKB-KW"/>
</dbReference>
<dbReference type="GO" id="GO:0051082">
    <property type="term" value="F:unfolded protein binding"/>
    <property type="evidence" value="ECO:0007669"/>
    <property type="project" value="UniProtKB-UniRule"/>
</dbReference>
<dbReference type="GO" id="GO:0042026">
    <property type="term" value="P:protein refolding"/>
    <property type="evidence" value="ECO:0007669"/>
    <property type="project" value="UniProtKB-UniRule"/>
</dbReference>
<dbReference type="CDD" id="cd03344">
    <property type="entry name" value="GroEL"/>
    <property type="match status" value="1"/>
</dbReference>
<dbReference type="FunFam" id="3.50.7.10:FF:000001">
    <property type="entry name" value="60 kDa chaperonin"/>
    <property type="match status" value="1"/>
</dbReference>
<dbReference type="Gene3D" id="3.50.7.10">
    <property type="entry name" value="GroEL"/>
    <property type="match status" value="1"/>
</dbReference>
<dbReference type="Gene3D" id="1.10.560.10">
    <property type="entry name" value="GroEL-like equatorial domain"/>
    <property type="match status" value="1"/>
</dbReference>
<dbReference type="Gene3D" id="3.30.260.10">
    <property type="entry name" value="TCP-1-like chaperonin intermediate domain"/>
    <property type="match status" value="1"/>
</dbReference>
<dbReference type="HAMAP" id="MF_00600">
    <property type="entry name" value="CH60"/>
    <property type="match status" value="1"/>
</dbReference>
<dbReference type="InterPro" id="IPR018370">
    <property type="entry name" value="Chaperonin_Cpn60_CS"/>
</dbReference>
<dbReference type="InterPro" id="IPR001844">
    <property type="entry name" value="Cpn60/GroEL"/>
</dbReference>
<dbReference type="InterPro" id="IPR002423">
    <property type="entry name" value="Cpn60/GroEL/TCP-1"/>
</dbReference>
<dbReference type="InterPro" id="IPR027409">
    <property type="entry name" value="GroEL-like_apical_dom_sf"/>
</dbReference>
<dbReference type="InterPro" id="IPR027413">
    <property type="entry name" value="GROEL-like_equatorial_sf"/>
</dbReference>
<dbReference type="InterPro" id="IPR027410">
    <property type="entry name" value="TCP-1-like_intermed_sf"/>
</dbReference>
<dbReference type="NCBIfam" id="TIGR02348">
    <property type="entry name" value="GroEL"/>
    <property type="match status" value="1"/>
</dbReference>
<dbReference type="NCBIfam" id="NF000592">
    <property type="entry name" value="PRK00013.1"/>
    <property type="match status" value="1"/>
</dbReference>
<dbReference type="NCBIfam" id="NF009487">
    <property type="entry name" value="PRK12849.1"/>
    <property type="match status" value="1"/>
</dbReference>
<dbReference type="NCBIfam" id="NF009488">
    <property type="entry name" value="PRK12850.1"/>
    <property type="match status" value="1"/>
</dbReference>
<dbReference type="NCBIfam" id="NF009489">
    <property type="entry name" value="PRK12851.1"/>
    <property type="match status" value="1"/>
</dbReference>
<dbReference type="PANTHER" id="PTHR45633">
    <property type="entry name" value="60 KDA HEAT SHOCK PROTEIN, MITOCHONDRIAL"/>
    <property type="match status" value="1"/>
</dbReference>
<dbReference type="Pfam" id="PF00118">
    <property type="entry name" value="Cpn60_TCP1"/>
    <property type="match status" value="1"/>
</dbReference>
<dbReference type="PRINTS" id="PR00298">
    <property type="entry name" value="CHAPERONIN60"/>
</dbReference>
<dbReference type="SUPFAM" id="SSF52029">
    <property type="entry name" value="GroEL apical domain-like"/>
    <property type="match status" value="1"/>
</dbReference>
<dbReference type="SUPFAM" id="SSF48592">
    <property type="entry name" value="GroEL equatorial domain-like"/>
    <property type="match status" value="1"/>
</dbReference>
<dbReference type="SUPFAM" id="SSF54849">
    <property type="entry name" value="GroEL-intermediate domain like"/>
    <property type="match status" value="1"/>
</dbReference>
<dbReference type="PROSITE" id="PS00296">
    <property type="entry name" value="CHAPERONINS_CPN60"/>
    <property type="match status" value="1"/>
</dbReference>
<evidence type="ECO:0000255" key="1">
    <source>
        <dbReference type="HAMAP-Rule" id="MF_00600"/>
    </source>
</evidence>
<keyword id="KW-0067">ATP-binding</keyword>
<keyword id="KW-0143">Chaperone</keyword>
<keyword id="KW-0963">Cytoplasm</keyword>
<keyword id="KW-0413">Isomerase</keyword>
<keyword id="KW-0547">Nucleotide-binding</keyword>
<keyword id="KW-1185">Reference proteome</keyword>
<comment type="function">
    <text evidence="1">Together with its co-chaperonin GroES, plays an essential role in assisting protein folding. The GroEL-GroES system forms a nano-cage that allows encapsulation of the non-native substrate proteins and provides a physical environment optimized to promote and accelerate protein folding.</text>
</comment>
<comment type="catalytic activity">
    <reaction evidence="1">
        <text>ATP + H2O + a folded polypeptide = ADP + phosphate + an unfolded polypeptide.</text>
        <dbReference type="EC" id="5.6.1.7"/>
    </reaction>
</comment>
<comment type="subunit">
    <text evidence="1">Forms a cylinder of 14 subunits composed of two heptameric rings stacked back-to-back. Interacts with the co-chaperonin GroES.</text>
</comment>
<comment type="subcellular location">
    <subcellularLocation>
        <location evidence="1">Cytoplasm</location>
    </subcellularLocation>
</comment>
<comment type="similarity">
    <text evidence="1">Belongs to the chaperonin (HSP60) family.</text>
</comment>